<accession>Q9SVV9</accession>
<accession>C0Z3B0</accession>
<accession>F4JQR3</accession>
<name>AML3_ARATH</name>
<comment type="function">
    <text evidence="3 4">Probable RNA-binding protein that plays a role in meiosis and vegetative growth.</text>
</comment>
<comment type="developmental stage">
    <text evidence="2">Expressed in the embryo at the heart and torpedo stages.</text>
</comment>
<comment type="disruption phenotype">
    <text evidence="3">Early flowering.</text>
</comment>
<comment type="sequence caution" evidence="5">
    <conflict type="miscellaneous discrepancy">
        <sequence resource="EMBL-CDS" id="BAH57189"/>
    </conflict>
    <text>Sequencing errors.</text>
</comment>
<comment type="sequence caution" evidence="5">
    <conflict type="erroneous gene model prediction">
        <sequence resource="EMBL-CDS" id="CAB53653"/>
    </conflict>
</comment>
<comment type="sequence caution" evidence="5">
    <conflict type="frameshift">
        <sequence resource="EMBL-CDS" id="CAB53653"/>
    </conflict>
</comment>
<comment type="sequence caution" evidence="5">
    <conflict type="erroneous gene model prediction">
        <sequence resource="EMBL-CDS" id="CAB78814"/>
    </conflict>
</comment>
<comment type="sequence caution" evidence="5">
    <conflict type="frameshift">
        <sequence resource="EMBL-CDS" id="CAB78814"/>
    </conflict>
</comment>
<dbReference type="EMBL" id="AL110123">
    <property type="protein sequence ID" value="CAB53653.1"/>
    <property type="status" value="ALT_SEQ"/>
    <property type="molecule type" value="Genomic_DNA"/>
</dbReference>
<dbReference type="EMBL" id="AL161548">
    <property type="protein sequence ID" value="CAB78814.1"/>
    <property type="status" value="ALT_SEQ"/>
    <property type="molecule type" value="Genomic_DNA"/>
</dbReference>
<dbReference type="EMBL" id="CP002687">
    <property type="status" value="NOT_ANNOTATED_CDS"/>
    <property type="molecule type" value="Genomic_DNA"/>
</dbReference>
<dbReference type="EMBL" id="AK319074">
    <property type="protein sequence ID" value="BAH57189.1"/>
    <property type="status" value="ALT_SEQ"/>
    <property type="molecule type" value="mRNA"/>
</dbReference>
<dbReference type="PIR" id="T14812">
    <property type="entry name" value="T14812"/>
</dbReference>
<dbReference type="SMR" id="Q9SVV9"/>
<dbReference type="STRING" id="3702.Q9SVV9"/>
<dbReference type="PaxDb" id="3702-AT4G18120.1"/>
<dbReference type="PeptideAtlas" id="Q9SVV9"/>
<dbReference type="Araport" id="AT4G18120"/>
<dbReference type="TAIR" id="AT4G18120"/>
<dbReference type="eggNOG" id="KOG4660">
    <property type="taxonomic scope" value="Eukaryota"/>
</dbReference>
<dbReference type="InParanoid" id="Q9SVV9"/>
<dbReference type="PRO" id="PR:Q9SVV9"/>
<dbReference type="Proteomes" id="UP000006548">
    <property type="component" value="Chromosome 4"/>
</dbReference>
<dbReference type="ExpressionAtlas" id="Q9SVV9">
    <property type="expression patterns" value="baseline and differential"/>
</dbReference>
<dbReference type="GO" id="GO:0005634">
    <property type="term" value="C:nucleus"/>
    <property type="evidence" value="ECO:0000314"/>
    <property type="project" value="TAIR"/>
</dbReference>
<dbReference type="GO" id="GO:0003723">
    <property type="term" value="F:RNA binding"/>
    <property type="evidence" value="ECO:0000318"/>
    <property type="project" value="GO_Central"/>
</dbReference>
<dbReference type="GO" id="GO:0051321">
    <property type="term" value="P:meiotic cell cycle"/>
    <property type="evidence" value="ECO:0007669"/>
    <property type="project" value="UniProtKB-KW"/>
</dbReference>
<dbReference type="GO" id="GO:0045927">
    <property type="term" value="P:positive regulation of growth"/>
    <property type="evidence" value="ECO:0000315"/>
    <property type="project" value="UniProtKB"/>
</dbReference>
<dbReference type="GO" id="GO:0045836">
    <property type="term" value="P:positive regulation of meiotic nuclear division"/>
    <property type="evidence" value="ECO:0000315"/>
    <property type="project" value="UniProtKB"/>
</dbReference>
<dbReference type="CDD" id="cd12524">
    <property type="entry name" value="RRM1_MEI2_like"/>
    <property type="match status" value="1"/>
</dbReference>
<dbReference type="CDD" id="cd12529">
    <property type="entry name" value="RRM2_MEI2_like"/>
    <property type="match status" value="1"/>
</dbReference>
<dbReference type="CDD" id="cd12531">
    <property type="entry name" value="RRM3_MEI2_like"/>
    <property type="match status" value="1"/>
</dbReference>
<dbReference type="FunFam" id="3.30.70.330:FF:000063">
    <property type="entry name" value="MEI2-like protein 5 isoform 2"/>
    <property type="match status" value="1"/>
</dbReference>
<dbReference type="FunFam" id="3.30.70.330:FF:000101">
    <property type="entry name" value="Protein MEI2-like 1"/>
    <property type="match status" value="1"/>
</dbReference>
<dbReference type="Gene3D" id="3.30.70.330">
    <property type="match status" value="3"/>
</dbReference>
<dbReference type="InterPro" id="IPR034453">
    <property type="entry name" value="MEI2-like_RRM1"/>
</dbReference>
<dbReference type="InterPro" id="IPR034454">
    <property type="entry name" value="MEI2-like_RRM3"/>
</dbReference>
<dbReference type="InterPro" id="IPR007201">
    <property type="entry name" value="Mei2-like_Rrm_C"/>
</dbReference>
<dbReference type="InterPro" id="IPR012677">
    <property type="entry name" value="Nucleotide-bd_a/b_plait_sf"/>
</dbReference>
<dbReference type="InterPro" id="IPR035979">
    <property type="entry name" value="RBD_domain_sf"/>
</dbReference>
<dbReference type="InterPro" id="IPR000504">
    <property type="entry name" value="RRM_dom"/>
</dbReference>
<dbReference type="PANTHER" id="PTHR23189">
    <property type="entry name" value="RNA RECOGNITION MOTIF-CONTAINING"/>
    <property type="match status" value="1"/>
</dbReference>
<dbReference type="Pfam" id="PF00076">
    <property type="entry name" value="RRM_1"/>
    <property type="match status" value="2"/>
</dbReference>
<dbReference type="Pfam" id="PF04059">
    <property type="entry name" value="RRM_2"/>
    <property type="match status" value="1"/>
</dbReference>
<dbReference type="SMART" id="SM00360">
    <property type="entry name" value="RRM"/>
    <property type="match status" value="3"/>
</dbReference>
<dbReference type="SUPFAM" id="SSF54928">
    <property type="entry name" value="RNA-binding domain, RBD"/>
    <property type="match status" value="2"/>
</dbReference>
<dbReference type="PROSITE" id="PS50102">
    <property type="entry name" value="RRM"/>
    <property type="match status" value="2"/>
</dbReference>
<feature type="chain" id="PRO_0000409343" description="Protein MEI2-like 3">
    <location>
        <begin position="1"/>
        <end position="759"/>
    </location>
</feature>
<feature type="domain" description="RRM 1" evidence="1">
    <location>
        <begin position="166"/>
        <end position="239"/>
    </location>
</feature>
<feature type="domain" description="RRM 2" evidence="1">
    <location>
        <begin position="251"/>
        <end position="324"/>
    </location>
</feature>
<organism>
    <name type="scientific">Arabidopsis thaliana</name>
    <name type="common">Mouse-ear cress</name>
    <dbReference type="NCBI Taxonomy" id="3702"/>
    <lineage>
        <taxon>Eukaryota</taxon>
        <taxon>Viridiplantae</taxon>
        <taxon>Streptophyta</taxon>
        <taxon>Embryophyta</taxon>
        <taxon>Tracheophyta</taxon>
        <taxon>Spermatophyta</taxon>
        <taxon>Magnoliopsida</taxon>
        <taxon>eudicotyledons</taxon>
        <taxon>Gunneridae</taxon>
        <taxon>Pentapetalae</taxon>
        <taxon>rosids</taxon>
        <taxon>malvids</taxon>
        <taxon>Brassicales</taxon>
        <taxon>Brassicaceae</taxon>
        <taxon>Camelineae</taxon>
        <taxon>Arabidopsis</taxon>
    </lineage>
</organism>
<keyword id="KW-0469">Meiosis</keyword>
<keyword id="KW-1185">Reference proteome</keyword>
<keyword id="KW-0677">Repeat</keyword>
<keyword id="KW-0694">RNA-binding</keyword>
<proteinExistence type="evidence at transcript level"/>
<gene>
    <name type="primary">ML3</name>
    <name type="ordered locus">At4g18120</name>
    <name type="ORF">F15J5.90</name>
</gene>
<evidence type="ECO:0000255" key="1">
    <source>
        <dbReference type="PROSITE-ProRule" id="PRU00176"/>
    </source>
</evidence>
<evidence type="ECO:0000269" key="2">
    <source>
    </source>
</evidence>
<evidence type="ECO:0000269" key="3">
    <source>
    </source>
</evidence>
<evidence type="ECO:0000269" key="4">
    <source>
    </source>
</evidence>
<evidence type="ECO:0000305" key="5"/>
<sequence>MNIPSGTFSRSDHFHASSDASLFSSSLPLIQHQNINPRDSYHQSVDEMASGLDHFSGGIGNMLDDGDSHPIGNMLPDDEEELFSGLMDDLNLSSLPATLDDLEDYDLFGSGGGLELETDPYDSLNKGFSRMGFADSNVDNVMPQNIFQNGVGSIAGEHPYGEHPSRTLFVRNINSNVEDSELQALFEQYGHIRTLYTACKQRGFVMVSYNDIRASRAAMRALQGKLLKKRKLDIHFSIPKDNPSEKDVNQGTLVVFNLAPSVSNRDLENIFGVYGEIKEIRETPNKRHHKFVEFFDVRSADAALKALNRTEIAGKRIKLEHSRPGGARRNMMLQMNPELEQDDSYSYLNHVESPLASSPIGNWRNSPIDHPLQSFSKSPIFGNLSPTKNIRYPEFSMKTASVNNDQEGRRFSHLDHLFSSSSYNNASHKASTFQQPQSFGSVSSFGSLNSHPSHVETLSGSEFLWGSPSSSAWPVNPFSSNRENHRFPYSAQNGSLHQLHHIGSAPSGFFPRSPETSSMGSVAFRGASGNMNAQRNLRETSSPNFKMLSAPRRSQLFTGNGSYLWPAATMVSIDDPLEDGSNQQFDSNGNQADIKIQFQLDLSKIMRGEDPRTTLMIKNIPNKYTRNMLLAAIDEKNSGTYDFLYLPIDFKNKCNVGYAFINMVSPKFTIALYEAFNGKKWDKFNSEKVASLAYARIQGKAALIAHFQNSSLMNEDRRCQPIVFDGSESKYPIIRENSQLEASNSTVSHPLVGENTHQS</sequence>
<reference key="1">
    <citation type="journal article" date="1999" name="Nature">
        <title>Sequence and analysis of chromosome 4 of the plant Arabidopsis thaliana.</title>
        <authorList>
            <person name="Mayer K.F.X."/>
            <person name="Schueller C."/>
            <person name="Wambutt R."/>
            <person name="Murphy G."/>
            <person name="Volckaert G."/>
            <person name="Pohl T."/>
            <person name="Duesterhoeft A."/>
            <person name="Stiekema W."/>
            <person name="Entian K.-D."/>
            <person name="Terryn N."/>
            <person name="Harris B."/>
            <person name="Ansorge W."/>
            <person name="Brandt P."/>
            <person name="Grivell L.A."/>
            <person name="Rieger M."/>
            <person name="Weichselgartner M."/>
            <person name="de Simone V."/>
            <person name="Obermaier B."/>
            <person name="Mache R."/>
            <person name="Mueller M."/>
            <person name="Kreis M."/>
            <person name="Delseny M."/>
            <person name="Puigdomenech P."/>
            <person name="Watson M."/>
            <person name="Schmidtheini T."/>
            <person name="Reichert B."/>
            <person name="Portetelle D."/>
            <person name="Perez-Alonso M."/>
            <person name="Boutry M."/>
            <person name="Bancroft I."/>
            <person name="Vos P."/>
            <person name="Hoheisel J."/>
            <person name="Zimmermann W."/>
            <person name="Wedler H."/>
            <person name="Ridley P."/>
            <person name="Langham S.-A."/>
            <person name="McCullagh B."/>
            <person name="Bilham L."/>
            <person name="Robben J."/>
            <person name="van der Schueren J."/>
            <person name="Grymonprez B."/>
            <person name="Chuang Y.-J."/>
            <person name="Vandenbussche F."/>
            <person name="Braeken M."/>
            <person name="Weltjens I."/>
            <person name="Voet M."/>
            <person name="Bastiaens I."/>
            <person name="Aert R."/>
            <person name="Defoor E."/>
            <person name="Weitzenegger T."/>
            <person name="Bothe G."/>
            <person name="Ramsperger U."/>
            <person name="Hilbert H."/>
            <person name="Braun M."/>
            <person name="Holzer E."/>
            <person name="Brandt A."/>
            <person name="Peters S."/>
            <person name="van Staveren M."/>
            <person name="Dirkse W."/>
            <person name="Mooijman P."/>
            <person name="Klein Lankhorst R."/>
            <person name="Rose M."/>
            <person name="Hauf J."/>
            <person name="Koetter P."/>
            <person name="Berneiser S."/>
            <person name="Hempel S."/>
            <person name="Feldpausch M."/>
            <person name="Lamberth S."/>
            <person name="Van den Daele H."/>
            <person name="De Keyser A."/>
            <person name="Buysshaert C."/>
            <person name="Gielen J."/>
            <person name="Villarroel R."/>
            <person name="De Clercq R."/>
            <person name="van Montagu M."/>
            <person name="Rogers J."/>
            <person name="Cronin A."/>
            <person name="Quail M.A."/>
            <person name="Bray-Allen S."/>
            <person name="Clark L."/>
            <person name="Doggett J."/>
            <person name="Hall S."/>
            <person name="Kay M."/>
            <person name="Lennard N."/>
            <person name="McLay K."/>
            <person name="Mayes R."/>
            <person name="Pettett A."/>
            <person name="Rajandream M.A."/>
            <person name="Lyne M."/>
            <person name="Benes V."/>
            <person name="Rechmann S."/>
            <person name="Borkova D."/>
            <person name="Bloecker H."/>
            <person name="Scharfe M."/>
            <person name="Grimm M."/>
            <person name="Loehnert T.-H."/>
            <person name="Dose S."/>
            <person name="de Haan M."/>
            <person name="Maarse A.C."/>
            <person name="Schaefer M."/>
            <person name="Mueller-Auer S."/>
            <person name="Gabel C."/>
            <person name="Fuchs M."/>
            <person name="Fartmann B."/>
            <person name="Granderath K."/>
            <person name="Dauner D."/>
            <person name="Herzl A."/>
            <person name="Neumann S."/>
            <person name="Argiriou A."/>
            <person name="Vitale D."/>
            <person name="Liguori R."/>
            <person name="Piravandi E."/>
            <person name="Massenet O."/>
            <person name="Quigley F."/>
            <person name="Clabauld G."/>
            <person name="Muendlein A."/>
            <person name="Felber R."/>
            <person name="Schnabl S."/>
            <person name="Hiller R."/>
            <person name="Schmidt W."/>
            <person name="Lecharny A."/>
            <person name="Aubourg S."/>
            <person name="Chefdor F."/>
            <person name="Cooke R."/>
            <person name="Berger C."/>
            <person name="Monfort A."/>
            <person name="Casacuberta E."/>
            <person name="Gibbons T."/>
            <person name="Weber N."/>
            <person name="Vandenbol M."/>
            <person name="Bargues M."/>
            <person name="Terol J."/>
            <person name="Torres A."/>
            <person name="Perez-Perez A."/>
            <person name="Purnelle B."/>
            <person name="Bent E."/>
            <person name="Johnson S."/>
            <person name="Tacon D."/>
            <person name="Jesse T."/>
            <person name="Heijnen L."/>
            <person name="Schwarz S."/>
            <person name="Scholler P."/>
            <person name="Heber S."/>
            <person name="Francs P."/>
            <person name="Bielke C."/>
            <person name="Frishman D."/>
            <person name="Haase D."/>
            <person name="Lemcke K."/>
            <person name="Mewes H.-W."/>
            <person name="Stocker S."/>
            <person name="Zaccaria P."/>
            <person name="Bevan M."/>
            <person name="Wilson R.K."/>
            <person name="de la Bastide M."/>
            <person name="Habermann K."/>
            <person name="Parnell L."/>
            <person name="Dedhia N."/>
            <person name="Gnoj L."/>
            <person name="Schutz K."/>
            <person name="Huang E."/>
            <person name="Spiegel L."/>
            <person name="Sekhon M."/>
            <person name="Murray J."/>
            <person name="Sheet P."/>
            <person name="Cordes M."/>
            <person name="Abu-Threideh J."/>
            <person name="Stoneking T."/>
            <person name="Kalicki J."/>
            <person name="Graves T."/>
            <person name="Harmon G."/>
            <person name="Edwards J."/>
            <person name="Latreille P."/>
            <person name="Courtney L."/>
            <person name="Cloud J."/>
            <person name="Abbott A."/>
            <person name="Scott K."/>
            <person name="Johnson D."/>
            <person name="Minx P."/>
            <person name="Bentley D."/>
            <person name="Fulton B."/>
            <person name="Miller N."/>
            <person name="Greco T."/>
            <person name="Kemp K."/>
            <person name="Kramer J."/>
            <person name="Fulton L."/>
            <person name="Mardis E."/>
            <person name="Dante M."/>
            <person name="Pepin K."/>
            <person name="Hillier L.W."/>
            <person name="Nelson J."/>
            <person name="Spieth J."/>
            <person name="Ryan E."/>
            <person name="Andrews S."/>
            <person name="Geisel C."/>
            <person name="Layman D."/>
            <person name="Du H."/>
            <person name="Ali J."/>
            <person name="Berghoff A."/>
            <person name="Jones K."/>
            <person name="Drone K."/>
            <person name="Cotton M."/>
            <person name="Joshu C."/>
            <person name="Antonoiu B."/>
            <person name="Zidanic M."/>
            <person name="Strong C."/>
            <person name="Sun H."/>
            <person name="Lamar B."/>
            <person name="Yordan C."/>
            <person name="Ma P."/>
            <person name="Zhong J."/>
            <person name="Preston R."/>
            <person name="Vil D."/>
            <person name="Shekher M."/>
            <person name="Matero A."/>
            <person name="Shah R."/>
            <person name="Swaby I.K."/>
            <person name="O'Shaughnessy A."/>
            <person name="Rodriguez M."/>
            <person name="Hoffman J."/>
            <person name="Till S."/>
            <person name="Granat S."/>
            <person name="Shohdy N."/>
            <person name="Hasegawa A."/>
            <person name="Hameed A."/>
            <person name="Lodhi M."/>
            <person name="Johnson A."/>
            <person name="Chen E."/>
            <person name="Marra M.A."/>
            <person name="Martienssen R."/>
            <person name="McCombie W.R."/>
        </authorList>
    </citation>
    <scope>NUCLEOTIDE SEQUENCE [LARGE SCALE GENOMIC DNA]</scope>
    <source>
        <strain>cv. Columbia</strain>
    </source>
</reference>
<reference key="2">
    <citation type="journal article" date="2017" name="Plant J.">
        <title>Araport11: a complete reannotation of the Arabidopsis thaliana reference genome.</title>
        <authorList>
            <person name="Cheng C.Y."/>
            <person name="Krishnakumar V."/>
            <person name="Chan A.P."/>
            <person name="Thibaud-Nissen F."/>
            <person name="Schobel S."/>
            <person name="Town C.D."/>
        </authorList>
    </citation>
    <scope>GENOME REANNOTATION</scope>
    <source>
        <strain>cv. Columbia</strain>
    </source>
</reference>
<reference key="3">
    <citation type="journal article" date="2009" name="DNA Res.">
        <title>Analysis of multiple occurrences of alternative splicing events in Arabidopsis thaliana using novel sequenced full-length cDNAs.</title>
        <authorList>
            <person name="Iida K."/>
            <person name="Fukami-Kobayashi K."/>
            <person name="Toyoda A."/>
            <person name="Sakaki Y."/>
            <person name="Kobayashi M."/>
            <person name="Seki M."/>
            <person name="Shinozaki K."/>
        </authorList>
    </citation>
    <scope>NUCLEOTIDE SEQUENCE [LARGE SCALE MRNA]</scope>
    <source>
        <strain>cv. Columbia</strain>
    </source>
</reference>
<reference key="4">
    <citation type="journal article" date="2004" name="Plant Mol. Biol.">
        <title>Diversification of genes encoding mei2 -like RNA binding proteins in plants.</title>
        <authorList>
            <person name="Anderson G.H."/>
            <person name="Alvarez N.D."/>
            <person name="Gilman C."/>
            <person name="Jeffares D.C."/>
            <person name="Trainor V.C."/>
            <person name="Hanson M.R."/>
            <person name="Veit B."/>
        </authorList>
    </citation>
    <scope>GENE FAMILY</scope>
    <scope>DEVELOPMENTAL STAGE</scope>
</reference>
<reference key="5">
    <citation type="journal article" date="2005" name="BMC Plant Biol.">
        <title>The Arabidopsis Mei2 homologue AML1 binds AtRaptor1B, the plant homologue of a major regulator of eukaryotic cell growth.</title>
        <authorList>
            <person name="Anderson G.H."/>
            <person name="Hanson M.R."/>
        </authorList>
    </citation>
    <scope>FUNCTION</scope>
    <scope>DISRUPTION PHENOTYPE</scope>
</reference>
<reference key="6">
    <citation type="journal article" date="2006" name="Plant Cell">
        <title>The Arabidopsis-mei2-like genes play a role in meiosis and vegetative growth in Arabidopsis.</title>
        <authorList>
            <person name="Kaur J."/>
            <person name="Sebastian J."/>
            <person name="Siddiqi I."/>
        </authorList>
    </citation>
    <scope>FUNCTION</scope>
    <scope>TISSUE SPECIFICITY</scope>
</reference>
<protein>
    <recommendedName>
        <fullName>Protein MEI2-like 3</fullName>
        <shortName>AML3</shortName>
    </recommendedName>
    <alternativeName>
        <fullName>MEI2-like protein 3</fullName>
    </alternativeName>
</protein>